<feature type="chain" id="PRO_1000057127" description="LexA repressor">
    <location>
        <begin position="1"/>
        <end position="213"/>
    </location>
</feature>
<feature type="DNA-binding region" description="H-T-H motif" evidence="1">
    <location>
        <begin position="29"/>
        <end position="49"/>
    </location>
</feature>
<feature type="active site" description="For autocatalytic cleavage activity" evidence="1">
    <location>
        <position position="136"/>
    </location>
</feature>
<feature type="active site" description="For autocatalytic cleavage activity" evidence="1">
    <location>
        <position position="173"/>
    </location>
</feature>
<feature type="site" description="Cleavage; by autolysis" evidence="1">
    <location>
        <begin position="101"/>
        <end position="102"/>
    </location>
</feature>
<name>LEXA_ACET2</name>
<organism>
    <name type="scientific">Acetivibrio thermocellus (strain ATCC 27405 / DSM 1237 / JCM 9322 / NBRC 103400 / NCIMB 10682 / NRRL B-4536 / VPI 7372)</name>
    <name type="common">Clostridium thermocellum</name>
    <dbReference type="NCBI Taxonomy" id="203119"/>
    <lineage>
        <taxon>Bacteria</taxon>
        <taxon>Bacillati</taxon>
        <taxon>Bacillota</taxon>
        <taxon>Clostridia</taxon>
        <taxon>Eubacteriales</taxon>
        <taxon>Oscillospiraceae</taxon>
        <taxon>Acetivibrio</taxon>
    </lineage>
</organism>
<protein>
    <recommendedName>
        <fullName evidence="1">LexA repressor</fullName>
        <ecNumber evidence="1">3.4.21.88</ecNumber>
    </recommendedName>
</protein>
<keyword id="KW-0068">Autocatalytic cleavage</keyword>
<keyword id="KW-0227">DNA damage</keyword>
<keyword id="KW-0234">DNA repair</keyword>
<keyword id="KW-0235">DNA replication</keyword>
<keyword id="KW-0238">DNA-binding</keyword>
<keyword id="KW-0378">Hydrolase</keyword>
<keyword id="KW-1185">Reference proteome</keyword>
<keyword id="KW-0678">Repressor</keyword>
<keyword id="KW-0742">SOS response</keyword>
<keyword id="KW-0804">Transcription</keyword>
<keyword id="KW-0805">Transcription regulation</keyword>
<reference key="1">
    <citation type="submission" date="2007-02" db="EMBL/GenBank/DDBJ databases">
        <title>Complete sequence of Clostridium thermocellum ATCC 27405.</title>
        <authorList>
            <consortium name="US DOE Joint Genome Institute"/>
            <person name="Copeland A."/>
            <person name="Lucas S."/>
            <person name="Lapidus A."/>
            <person name="Barry K."/>
            <person name="Detter J.C."/>
            <person name="Glavina del Rio T."/>
            <person name="Hammon N."/>
            <person name="Israni S."/>
            <person name="Dalin E."/>
            <person name="Tice H."/>
            <person name="Pitluck S."/>
            <person name="Chertkov O."/>
            <person name="Brettin T."/>
            <person name="Bruce D."/>
            <person name="Han C."/>
            <person name="Tapia R."/>
            <person name="Gilna P."/>
            <person name="Schmutz J."/>
            <person name="Larimer F."/>
            <person name="Land M."/>
            <person name="Hauser L."/>
            <person name="Kyrpides N."/>
            <person name="Mikhailova N."/>
            <person name="Wu J.H.D."/>
            <person name="Newcomb M."/>
            <person name="Richardson P."/>
        </authorList>
    </citation>
    <scope>NUCLEOTIDE SEQUENCE [LARGE SCALE GENOMIC DNA]</scope>
    <source>
        <strain>ATCC 27405 / DSM 1237 / JCM 9322 / NBRC 103400 / NCIMB 10682 / NRRL B-4536 / VPI 7372</strain>
    </source>
</reference>
<sequence>MQNKINEKQQKILDFLNEQIEKNGYPPSVREICNAVGFKSTSTVHSYLEKLRKQGLIQKDPSKPRALKVINNKKNSKTDEPKNIYSGKELVEVPIIGKVTAGQPILAVENIEDTFPLPLDFVQNSTVFMLRVQGDSMIEAGIFDNDYIVVKQQSTANNGDIVVALIDDEATVKTFYKEKGFIRLQPANKFYDPIIVRDNLSILGKVIGVFRKM</sequence>
<proteinExistence type="inferred from homology"/>
<gene>
    <name evidence="1" type="primary">lexA</name>
    <name type="ordered locus">Cthe_0773</name>
</gene>
<evidence type="ECO:0000255" key="1">
    <source>
        <dbReference type="HAMAP-Rule" id="MF_00015"/>
    </source>
</evidence>
<comment type="function">
    <text evidence="1">Represses a number of genes involved in the response to DNA damage (SOS response), including recA and lexA. In the presence of single-stranded DNA, RecA interacts with LexA causing an autocatalytic cleavage which disrupts the DNA-binding part of LexA, leading to derepression of the SOS regulon and eventually DNA repair.</text>
</comment>
<comment type="catalytic activity">
    <reaction evidence="1">
        <text>Hydrolysis of Ala-|-Gly bond in repressor LexA.</text>
        <dbReference type="EC" id="3.4.21.88"/>
    </reaction>
</comment>
<comment type="subunit">
    <text evidence="1">Homodimer.</text>
</comment>
<comment type="similarity">
    <text evidence="1">Belongs to the peptidase S24 family.</text>
</comment>
<accession>A3DDH9</accession>
<dbReference type="EC" id="3.4.21.88" evidence="1"/>
<dbReference type="EMBL" id="CP000568">
    <property type="protein sequence ID" value="ABN52008.1"/>
    <property type="molecule type" value="Genomic_DNA"/>
</dbReference>
<dbReference type="RefSeq" id="WP_003516324.1">
    <property type="nucleotide sequence ID" value="NC_009012.1"/>
</dbReference>
<dbReference type="SMR" id="A3DDH9"/>
<dbReference type="STRING" id="203119.Cthe_0773"/>
<dbReference type="MEROPS" id="S24.001"/>
<dbReference type="GeneID" id="35806228"/>
<dbReference type="KEGG" id="cth:Cthe_0773"/>
<dbReference type="eggNOG" id="COG1974">
    <property type="taxonomic scope" value="Bacteria"/>
</dbReference>
<dbReference type="HOGENOM" id="CLU_066192_45_1_9"/>
<dbReference type="OrthoDB" id="9802364at2"/>
<dbReference type="Proteomes" id="UP000002145">
    <property type="component" value="Chromosome"/>
</dbReference>
<dbReference type="GO" id="GO:0003677">
    <property type="term" value="F:DNA binding"/>
    <property type="evidence" value="ECO:0007669"/>
    <property type="project" value="UniProtKB-UniRule"/>
</dbReference>
<dbReference type="GO" id="GO:0004252">
    <property type="term" value="F:serine-type endopeptidase activity"/>
    <property type="evidence" value="ECO:0007669"/>
    <property type="project" value="UniProtKB-UniRule"/>
</dbReference>
<dbReference type="GO" id="GO:0006281">
    <property type="term" value="P:DNA repair"/>
    <property type="evidence" value="ECO:0007669"/>
    <property type="project" value="UniProtKB-UniRule"/>
</dbReference>
<dbReference type="GO" id="GO:0006260">
    <property type="term" value="P:DNA replication"/>
    <property type="evidence" value="ECO:0007669"/>
    <property type="project" value="UniProtKB-UniRule"/>
</dbReference>
<dbReference type="GO" id="GO:0045892">
    <property type="term" value="P:negative regulation of DNA-templated transcription"/>
    <property type="evidence" value="ECO:0007669"/>
    <property type="project" value="UniProtKB-UniRule"/>
</dbReference>
<dbReference type="GO" id="GO:0006508">
    <property type="term" value="P:proteolysis"/>
    <property type="evidence" value="ECO:0007669"/>
    <property type="project" value="InterPro"/>
</dbReference>
<dbReference type="GO" id="GO:0009432">
    <property type="term" value="P:SOS response"/>
    <property type="evidence" value="ECO:0007669"/>
    <property type="project" value="UniProtKB-UniRule"/>
</dbReference>
<dbReference type="CDD" id="cd00090">
    <property type="entry name" value="HTH_ARSR"/>
    <property type="match status" value="1"/>
</dbReference>
<dbReference type="CDD" id="cd06529">
    <property type="entry name" value="S24_LexA-like"/>
    <property type="match status" value="1"/>
</dbReference>
<dbReference type="FunFam" id="2.10.109.10:FF:000001">
    <property type="entry name" value="LexA repressor"/>
    <property type="match status" value="1"/>
</dbReference>
<dbReference type="Gene3D" id="2.10.109.10">
    <property type="entry name" value="Umud Fragment, subunit A"/>
    <property type="match status" value="1"/>
</dbReference>
<dbReference type="Gene3D" id="1.10.10.10">
    <property type="entry name" value="Winged helix-like DNA-binding domain superfamily/Winged helix DNA-binding domain"/>
    <property type="match status" value="1"/>
</dbReference>
<dbReference type="HAMAP" id="MF_00015">
    <property type="entry name" value="LexA"/>
    <property type="match status" value="1"/>
</dbReference>
<dbReference type="InterPro" id="IPR011991">
    <property type="entry name" value="ArsR-like_HTH"/>
</dbReference>
<dbReference type="InterPro" id="IPR006200">
    <property type="entry name" value="LexA"/>
</dbReference>
<dbReference type="InterPro" id="IPR039418">
    <property type="entry name" value="LexA-like"/>
</dbReference>
<dbReference type="InterPro" id="IPR036286">
    <property type="entry name" value="LexA/Signal_pep-like_sf"/>
</dbReference>
<dbReference type="InterPro" id="IPR006199">
    <property type="entry name" value="LexA_DNA-bd_dom"/>
</dbReference>
<dbReference type="InterPro" id="IPR050077">
    <property type="entry name" value="LexA_repressor"/>
</dbReference>
<dbReference type="InterPro" id="IPR006197">
    <property type="entry name" value="Peptidase_S24_LexA"/>
</dbReference>
<dbReference type="InterPro" id="IPR015927">
    <property type="entry name" value="Peptidase_S24_S26A/B/C"/>
</dbReference>
<dbReference type="InterPro" id="IPR036388">
    <property type="entry name" value="WH-like_DNA-bd_sf"/>
</dbReference>
<dbReference type="InterPro" id="IPR036390">
    <property type="entry name" value="WH_DNA-bd_sf"/>
</dbReference>
<dbReference type="NCBIfam" id="TIGR00498">
    <property type="entry name" value="lexA"/>
    <property type="match status" value="1"/>
</dbReference>
<dbReference type="PANTHER" id="PTHR33516">
    <property type="entry name" value="LEXA REPRESSOR"/>
    <property type="match status" value="1"/>
</dbReference>
<dbReference type="PANTHER" id="PTHR33516:SF2">
    <property type="entry name" value="LEXA REPRESSOR-RELATED"/>
    <property type="match status" value="1"/>
</dbReference>
<dbReference type="Pfam" id="PF01726">
    <property type="entry name" value="LexA_DNA_bind"/>
    <property type="match status" value="1"/>
</dbReference>
<dbReference type="Pfam" id="PF00717">
    <property type="entry name" value="Peptidase_S24"/>
    <property type="match status" value="1"/>
</dbReference>
<dbReference type="PRINTS" id="PR00726">
    <property type="entry name" value="LEXASERPTASE"/>
</dbReference>
<dbReference type="SUPFAM" id="SSF51306">
    <property type="entry name" value="LexA/Signal peptidase"/>
    <property type="match status" value="1"/>
</dbReference>
<dbReference type="SUPFAM" id="SSF46785">
    <property type="entry name" value="Winged helix' DNA-binding domain"/>
    <property type="match status" value="1"/>
</dbReference>